<reference key="1">
    <citation type="journal article" date="1999" name="J. Bacteriol.">
        <title>Cloning and characterization of a gene (mspA) encoding the major sheath protein of Treponema maltophilum ATCC 51939(T).</title>
        <authorList>
            <person name="Heuner K."/>
            <person name="Choi B.-K."/>
            <person name="Schade R."/>
            <person name="Moter A."/>
            <person name="Otto A."/>
            <person name="Goebel U.B."/>
        </authorList>
    </citation>
    <scope>NUCLEOTIDE SEQUENCE [GENOMIC DNA]</scope>
    <scope>PROTEIN SEQUENCE OF 20-34</scope>
    <source>
        <strain>ATCC 51939 / DSM 27366 / CIP 105146 / OMZ 679 / BR</strain>
    </source>
</reference>
<reference key="2">
    <citation type="journal article" date="2001" name="FEMS Microbiol. Lett.">
        <title>Outer sheath associated proteins of the oral spirochete Treponema maltophilum.</title>
        <authorList>
            <person name="Heuner K."/>
            <person name="Meltzer U."/>
            <person name="Choi B.-K."/>
            <person name="Goebel U.B."/>
        </authorList>
    </citation>
    <scope>SUBCELLULAR LOCATION</scope>
</reference>
<sequence>MKKALVFFVALAMIGSVFAAEPAAEAKVAEFSGNAAVTFGFDLDTVKAGFKNTTEADLKFNLMNGGDKSTTGNGVWGELKLVVNALQIRATADVSDGHTFAIQTKKDNDGEDTIFVEIDTAKLHFNDLYVGITSGDFRYGGSFWYPNALNYKDSKEDEKYTRSRAAKLGYDQGLVLGYEKKDLFKVELAARSKKDTTKKVEKVELVHLSAGAKIKEKEYYKTEPAAVTGDTAQDIFNDGTLVSVTADPKVKTLNAEGAYYKPVMKDDETNYWTNKFALGLYGEVTPIKDLRIGVGAAYVLGQLGAAASEDDKTNDISVFAGVDYRFNFNEDFFIQPTVTYNFYNDYKVASKNYAIETNKMNAGLRFGFAKSKSDSENESLLYTFFGQEKLFYETTKNDKGDQILLPGVSVFGSFNFKENAMKTELPVMLTFYSGELVQNLKAYALFGANLGPDAGKGTAVAMSDAVYKGIIEKKGMQAGLAASYDVKVNDAVTIVPAAGVLWTHGSQASGNDKMSADEVAVSLKADVKGLVSNTTFTAFWEKASFGKGAASVGGTKTSVDAVKKGVIGLKAKIAL</sequence>
<dbReference type="EMBL" id="Y17800">
    <property type="protein sequence ID" value="CAA76862.1"/>
    <property type="molecule type" value="Genomic_DNA"/>
</dbReference>
<dbReference type="GO" id="GO:0009279">
    <property type="term" value="C:cell outer membrane"/>
    <property type="evidence" value="ECO:0007669"/>
    <property type="project" value="UniProtKB-SubCell"/>
</dbReference>
<dbReference type="InterPro" id="IPR036709">
    <property type="entry name" value="Autotransporte_beta_dom_sf"/>
</dbReference>
<dbReference type="SUPFAM" id="SSF103515">
    <property type="entry name" value="Autotransporter"/>
    <property type="match status" value="1"/>
</dbReference>
<feature type="signal peptide" evidence="2">
    <location>
        <begin position="1"/>
        <end position="19"/>
    </location>
</feature>
<feature type="chain" id="PRO_0000021771" description="Major outer membrane protein MspA">
    <location>
        <begin position="20"/>
        <end position="575"/>
    </location>
</feature>
<evidence type="ECO:0000269" key="1">
    <source>
    </source>
</evidence>
<evidence type="ECO:0000269" key="2">
    <source>
    </source>
</evidence>
<name>MSPA_TREMA</name>
<keyword id="KW-0998">Cell outer membrane</keyword>
<keyword id="KW-0903">Direct protein sequencing</keyword>
<keyword id="KW-0472">Membrane</keyword>
<keyword id="KW-0732">Signal</keyword>
<gene>
    <name type="primary">mspA</name>
</gene>
<organism>
    <name type="scientific">Treponema maltophilum</name>
    <dbReference type="NCBI Taxonomy" id="51160"/>
    <lineage>
        <taxon>Bacteria</taxon>
        <taxon>Pseudomonadati</taxon>
        <taxon>Spirochaetota</taxon>
        <taxon>Spirochaetia</taxon>
        <taxon>Spirochaetales</taxon>
        <taxon>Treponemataceae</taxon>
        <taxon>Treponema</taxon>
    </lineage>
</organism>
<proteinExistence type="evidence at protein level"/>
<accession>Q9Z4I3</accession>
<comment type="function">
    <text>Major component of the outer membrane sheath.</text>
</comment>
<comment type="subcellular location">
    <subcellularLocation>
        <location evidence="1">Cell outer membrane</location>
        <topology evidence="1">Peripheral membrane protein</topology>
    </subcellularLocation>
</comment>
<protein>
    <recommendedName>
        <fullName>Major outer membrane protein MspA</fullName>
    </recommendedName>
    <alternativeName>
        <fullName>Major sheath protein</fullName>
    </alternativeName>
</protein>